<dbReference type="EC" id="1.17.4.1"/>
<dbReference type="EMBL" id="CR859428">
    <property type="protein sequence ID" value="CAH91600.1"/>
    <property type="molecule type" value="mRNA"/>
</dbReference>
<dbReference type="RefSeq" id="NP_001125944.1">
    <property type="nucleotide sequence ID" value="NM_001132472.1"/>
</dbReference>
<dbReference type="SMR" id="Q5R9G0"/>
<dbReference type="FunCoup" id="Q5R9G0">
    <property type="interactions" value="2090"/>
</dbReference>
<dbReference type="STRING" id="9601.ENSPPYP00000021083"/>
<dbReference type="Ensembl" id="ENSPPYT00000021926.3">
    <property type="protein sequence ID" value="ENSPPYP00000021083.2"/>
    <property type="gene ID" value="ENSPPYG00000018796.3"/>
</dbReference>
<dbReference type="GeneID" id="100172878"/>
<dbReference type="KEGG" id="pon:100172878"/>
<dbReference type="CTD" id="50484"/>
<dbReference type="eggNOG" id="KOG1567">
    <property type="taxonomic scope" value="Eukaryota"/>
</dbReference>
<dbReference type="GeneTree" id="ENSGT00390000013305"/>
<dbReference type="HOGENOM" id="CLU_035339_2_0_1"/>
<dbReference type="InParanoid" id="Q5R9G0"/>
<dbReference type="OMA" id="LEPMFLG"/>
<dbReference type="OrthoDB" id="10248373at2759"/>
<dbReference type="TreeFam" id="TF300465"/>
<dbReference type="Proteomes" id="UP000001595">
    <property type="component" value="Chromosome 8"/>
</dbReference>
<dbReference type="GO" id="GO:0005829">
    <property type="term" value="C:cytosol"/>
    <property type="evidence" value="ECO:0007669"/>
    <property type="project" value="Ensembl"/>
</dbReference>
<dbReference type="GO" id="GO:0005739">
    <property type="term" value="C:mitochondrion"/>
    <property type="evidence" value="ECO:0007669"/>
    <property type="project" value="GOC"/>
</dbReference>
<dbReference type="GO" id="GO:0005654">
    <property type="term" value="C:nucleoplasm"/>
    <property type="evidence" value="ECO:0007669"/>
    <property type="project" value="Ensembl"/>
</dbReference>
<dbReference type="GO" id="GO:0042802">
    <property type="term" value="F:identical protein binding"/>
    <property type="evidence" value="ECO:0007669"/>
    <property type="project" value="Ensembl"/>
</dbReference>
<dbReference type="GO" id="GO:0046872">
    <property type="term" value="F:metal ion binding"/>
    <property type="evidence" value="ECO:0007669"/>
    <property type="project" value="UniProtKB-KW"/>
</dbReference>
<dbReference type="GO" id="GO:0004748">
    <property type="term" value="F:ribonucleoside-diphosphate reductase activity, thioredoxin disulfide as acceptor"/>
    <property type="evidence" value="ECO:0007669"/>
    <property type="project" value="UniProtKB-EC"/>
</dbReference>
<dbReference type="GO" id="GO:0009265">
    <property type="term" value="P:2'-deoxyribonucleotide biosynthetic process"/>
    <property type="evidence" value="ECO:0007669"/>
    <property type="project" value="Ensembl"/>
</dbReference>
<dbReference type="GO" id="GO:0009200">
    <property type="term" value="P:deoxyribonucleoside triphosphate metabolic process"/>
    <property type="evidence" value="ECO:0007669"/>
    <property type="project" value="Ensembl"/>
</dbReference>
<dbReference type="GO" id="GO:0006281">
    <property type="term" value="P:DNA repair"/>
    <property type="evidence" value="ECO:0007669"/>
    <property type="project" value="UniProtKB-KW"/>
</dbReference>
<dbReference type="GO" id="GO:0001822">
    <property type="term" value="P:kidney development"/>
    <property type="evidence" value="ECO:0007669"/>
    <property type="project" value="Ensembl"/>
</dbReference>
<dbReference type="GO" id="GO:0006264">
    <property type="term" value="P:mitochondrial DNA replication"/>
    <property type="evidence" value="ECO:0007669"/>
    <property type="project" value="Ensembl"/>
</dbReference>
<dbReference type="GO" id="GO:1902254">
    <property type="term" value="P:negative regulation of intrinsic apoptotic signaling pathway by p53 class mediator"/>
    <property type="evidence" value="ECO:0007669"/>
    <property type="project" value="Ensembl"/>
</dbReference>
<dbReference type="GO" id="GO:0070318">
    <property type="term" value="P:positive regulation of G0 to G1 transition"/>
    <property type="evidence" value="ECO:0007669"/>
    <property type="project" value="Ensembl"/>
</dbReference>
<dbReference type="GO" id="GO:0010971">
    <property type="term" value="P:positive regulation of G2/M transition of mitotic cell cycle"/>
    <property type="evidence" value="ECO:0007669"/>
    <property type="project" value="Ensembl"/>
</dbReference>
<dbReference type="GO" id="GO:0003014">
    <property type="term" value="P:renal system process"/>
    <property type="evidence" value="ECO:0007669"/>
    <property type="project" value="Ensembl"/>
</dbReference>
<dbReference type="GO" id="GO:0006979">
    <property type="term" value="P:response to oxidative stress"/>
    <property type="evidence" value="ECO:0007669"/>
    <property type="project" value="Ensembl"/>
</dbReference>
<dbReference type="GO" id="GO:0009185">
    <property type="term" value="P:ribonucleoside diphosphate metabolic process"/>
    <property type="evidence" value="ECO:0007669"/>
    <property type="project" value="Ensembl"/>
</dbReference>
<dbReference type="CDD" id="cd01049">
    <property type="entry name" value="RNRR2"/>
    <property type="match status" value="1"/>
</dbReference>
<dbReference type="FunFam" id="1.10.620.20:FF:000004">
    <property type="entry name" value="Ribonucleoside-diphosphate reductase subunit M2 B"/>
    <property type="match status" value="1"/>
</dbReference>
<dbReference type="Gene3D" id="1.10.620.20">
    <property type="entry name" value="Ribonucleotide Reductase, subunit A"/>
    <property type="match status" value="1"/>
</dbReference>
<dbReference type="InterPro" id="IPR009078">
    <property type="entry name" value="Ferritin-like_SF"/>
</dbReference>
<dbReference type="InterPro" id="IPR012348">
    <property type="entry name" value="RNR-like"/>
</dbReference>
<dbReference type="InterPro" id="IPR033909">
    <property type="entry name" value="RNR_small"/>
</dbReference>
<dbReference type="InterPro" id="IPR030475">
    <property type="entry name" value="RNR_small_AS"/>
</dbReference>
<dbReference type="InterPro" id="IPR000358">
    <property type="entry name" value="RNR_small_fam"/>
</dbReference>
<dbReference type="PANTHER" id="PTHR23409">
    <property type="entry name" value="RIBONUCLEOSIDE-DIPHOSPHATE REDUCTASE SMALL CHAIN"/>
    <property type="match status" value="1"/>
</dbReference>
<dbReference type="PANTHER" id="PTHR23409:SF19">
    <property type="entry name" value="RIBONUCLEOSIDE-DIPHOSPHATE REDUCTASE SUBUNIT M2 B"/>
    <property type="match status" value="1"/>
</dbReference>
<dbReference type="Pfam" id="PF00268">
    <property type="entry name" value="Ribonuc_red_sm"/>
    <property type="match status" value="1"/>
</dbReference>
<dbReference type="SUPFAM" id="SSF47240">
    <property type="entry name" value="Ferritin-like"/>
    <property type="match status" value="1"/>
</dbReference>
<dbReference type="PROSITE" id="PS00368">
    <property type="entry name" value="RIBORED_SMALL"/>
    <property type="match status" value="1"/>
</dbReference>
<comment type="function">
    <text evidence="1">Plays a pivotal role in cell survival by repairing damaged DNA in a p53/TP53-dependent manner. Supplies deoxyribonucleotides for DNA repair in cells arrested at G1 or G2. Contains an iron-tyrosyl free radical center required for catalysis. Forms an active ribonucleotide reductase (RNR) complex with RRM1 which is expressed both in resting and proliferating cells in response to DNA damage (By similarity).</text>
</comment>
<comment type="catalytic activity">
    <reaction evidence="2">
        <text>a 2'-deoxyribonucleoside 5'-diphosphate + [thioredoxin]-disulfide + H2O = a ribonucleoside 5'-diphosphate + [thioredoxin]-dithiol</text>
        <dbReference type="Rhea" id="RHEA:23252"/>
        <dbReference type="Rhea" id="RHEA-COMP:10698"/>
        <dbReference type="Rhea" id="RHEA-COMP:10700"/>
        <dbReference type="ChEBI" id="CHEBI:15377"/>
        <dbReference type="ChEBI" id="CHEBI:29950"/>
        <dbReference type="ChEBI" id="CHEBI:50058"/>
        <dbReference type="ChEBI" id="CHEBI:57930"/>
        <dbReference type="ChEBI" id="CHEBI:73316"/>
        <dbReference type="EC" id="1.17.4.1"/>
    </reaction>
</comment>
<comment type="cofactor">
    <cofactor evidence="1">
        <name>Fe cation</name>
        <dbReference type="ChEBI" id="CHEBI:24875"/>
    </cofactor>
    <text evidence="1">Binds 2 iron ions per subunit.</text>
</comment>
<comment type="subunit">
    <text evidence="1">Heterotetramer with large (RRM1) subunit. Interacts with p53/TP53. Interacts with RRM1 in response to DNA damage (By similarity).</text>
</comment>
<comment type="subcellular location">
    <subcellularLocation>
        <location evidence="1">Cytoplasm</location>
    </subcellularLocation>
    <subcellularLocation>
        <location evidence="1">Nucleus</location>
    </subcellularLocation>
    <text evidence="1">Translocates from cytoplasm to nucleus in response to DNA damage.</text>
</comment>
<comment type="similarity">
    <text evidence="4">Belongs to the ribonucleoside diphosphate reductase small chain family.</text>
</comment>
<sequence length="351" mass="40764">MGDPERPEAAGLDQDERSSSDTNENEIKSNEEPLLRKSSRRFVIFPIQYPDIWKMYKQAQASFWTAEEVDLSKDLPHWNKLKADEKYFISHILAFFAASDGIVNENLVERFSQEVQVPEARCFYGFQILIENVHSEMYSLLIDTYIRDPKKREFLFNAIETMPYVKKKADWALRWIADRKSTFGERVVAFAAVEGVFFSGSFAAIFWLKKRGLMPGLTFSNELISRDEGLHCDFACLMFQYLVNKPSEERVREIIVDAVKIEQEFLTEALPVGLIGMNCILMKQYIEFVADRLLVELGFSKVFQAENPFDFMENISLEGKTNFFEKRVSEYQRFAVMAETTDNVFTLDADF</sequence>
<proteinExistence type="evidence at transcript level"/>
<accession>Q5R9G0</accession>
<gene>
    <name type="primary">RRM2B</name>
</gene>
<reference key="1">
    <citation type="submission" date="2004-11" db="EMBL/GenBank/DDBJ databases">
        <authorList>
            <consortium name="The German cDNA consortium"/>
        </authorList>
    </citation>
    <scope>NUCLEOTIDE SEQUENCE [LARGE SCALE MRNA]</scope>
    <source>
        <tissue>Kidney</tissue>
    </source>
</reference>
<keyword id="KW-0963">Cytoplasm</keyword>
<keyword id="KW-0215">Deoxyribonucleotide synthesis</keyword>
<keyword id="KW-0227">DNA damage</keyword>
<keyword id="KW-0234">DNA repair</keyword>
<keyword id="KW-0408">Iron</keyword>
<keyword id="KW-0479">Metal-binding</keyword>
<keyword id="KW-0539">Nucleus</keyword>
<keyword id="KW-0560">Oxidoreductase</keyword>
<keyword id="KW-1185">Reference proteome</keyword>
<organism>
    <name type="scientific">Pongo abelii</name>
    <name type="common">Sumatran orangutan</name>
    <name type="synonym">Pongo pygmaeus abelii</name>
    <dbReference type="NCBI Taxonomy" id="9601"/>
    <lineage>
        <taxon>Eukaryota</taxon>
        <taxon>Metazoa</taxon>
        <taxon>Chordata</taxon>
        <taxon>Craniata</taxon>
        <taxon>Vertebrata</taxon>
        <taxon>Euteleostomi</taxon>
        <taxon>Mammalia</taxon>
        <taxon>Eutheria</taxon>
        <taxon>Euarchontoglires</taxon>
        <taxon>Primates</taxon>
        <taxon>Haplorrhini</taxon>
        <taxon>Catarrhini</taxon>
        <taxon>Hominidae</taxon>
        <taxon>Pongo</taxon>
    </lineage>
</organism>
<evidence type="ECO:0000250" key="1"/>
<evidence type="ECO:0000255" key="2">
    <source>
        <dbReference type="PROSITE-ProRule" id="PRU10014"/>
    </source>
</evidence>
<evidence type="ECO:0000256" key="3">
    <source>
        <dbReference type="SAM" id="MobiDB-lite"/>
    </source>
</evidence>
<evidence type="ECO:0000305" key="4"/>
<feature type="chain" id="PRO_0000228153" description="Ribonucleoside-diphosphate reductase subunit M2 B">
    <location>
        <begin position="1"/>
        <end position="351"/>
    </location>
</feature>
<feature type="region of interest" description="Disordered" evidence="3">
    <location>
        <begin position="1"/>
        <end position="31"/>
    </location>
</feature>
<feature type="active site" evidence="2">
    <location>
        <position position="138"/>
    </location>
</feature>
<feature type="binding site" evidence="2">
    <location>
        <position position="100"/>
    </location>
    <ligand>
        <name>Fe cation</name>
        <dbReference type="ChEBI" id="CHEBI:24875"/>
        <label>1</label>
    </ligand>
</feature>
<feature type="binding site" evidence="2">
    <location>
        <position position="131"/>
    </location>
    <ligand>
        <name>Fe cation</name>
        <dbReference type="ChEBI" id="CHEBI:24875"/>
        <label>1</label>
    </ligand>
</feature>
<feature type="binding site" evidence="1">
    <location>
        <position position="131"/>
    </location>
    <ligand>
        <name>Fe cation</name>
        <dbReference type="ChEBI" id="CHEBI:24875"/>
        <label>2</label>
    </ligand>
</feature>
<feature type="binding site" evidence="2">
    <location>
        <position position="134"/>
    </location>
    <ligand>
        <name>Fe cation</name>
        <dbReference type="ChEBI" id="CHEBI:24875"/>
        <label>1</label>
    </ligand>
</feature>
<feature type="binding site" evidence="1">
    <location>
        <position position="194"/>
    </location>
    <ligand>
        <name>Fe cation</name>
        <dbReference type="ChEBI" id="CHEBI:24875"/>
        <label>2</label>
    </ligand>
</feature>
<feature type="binding site" evidence="1">
    <location>
        <position position="228"/>
    </location>
    <ligand>
        <name>Fe cation</name>
        <dbReference type="ChEBI" id="CHEBI:24875"/>
        <label>2</label>
    </ligand>
</feature>
<feature type="binding site" evidence="1">
    <location>
        <position position="231"/>
    </location>
    <ligand>
        <name>Fe cation</name>
        <dbReference type="ChEBI" id="CHEBI:24875"/>
        <label>2</label>
    </ligand>
</feature>
<name>RIR2B_PONAB</name>
<protein>
    <recommendedName>
        <fullName>Ribonucleoside-diphosphate reductase subunit M2 B</fullName>
        <ecNumber>1.17.4.1</ecNumber>
    </recommendedName>
</protein>